<gene>
    <name evidence="1" type="primary">ndhC</name>
    <name type="ordered locus">Npun_R5548</name>
</gene>
<reference key="1">
    <citation type="journal article" date="2013" name="Plant Physiol.">
        <title>A Nostoc punctiforme Sugar Transporter Necessary to Establish a Cyanobacterium-Plant Symbiosis.</title>
        <authorList>
            <person name="Ekman M."/>
            <person name="Picossi S."/>
            <person name="Campbell E.L."/>
            <person name="Meeks J.C."/>
            <person name="Flores E."/>
        </authorList>
    </citation>
    <scope>NUCLEOTIDE SEQUENCE [LARGE SCALE GENOMIC DNA]</scope>
    <source>
        <strain>ATCC 29133 / PCC 73102</strain>
    </source>
</reference>
<feature type="chain" id="PRO_0000362709" description="NAD(P)H-quinone oxidoreductase subunit 3">
    <location>
        <begin position="1"/>
        <end position="120"/>
    </location>
</feature>
<feature type="transmembrane region" description="Helical" evidence="1">
    <location>
        <begin position="1"/>
        <end position="21"/>
    </location>
</feature>
<feature type="transmembrane region" description="Helical" evidence="1">
    <location>
        <begin position="64"/>
        <end position="84"/>
    </location>
</feature>
<feature type="transmembrane region" description="Helical" evidence="1">
    <location>
        <begin position="89"/>
        <end position="109"/>
    </location>
</feature>
<evidence type="ECO:0000255" key="1">
    <source>
        <dbReference type="HAMAP-Rule" id="MF_01394"/>
    </source>
</evidence>
<accession>B2J6S7</accession>
<proteinExistence type="inferred from homology"/>
<sequence length="120" mass="13644">MFVLSGYEYLLGFFIICSLVPALALSASKLLRPSGYAPERRTTYESGMEPIGGAWIQFNIRYYMFALVFVVFDVETVFLYPWAVAFHRLGLLAFIEALVFIAILVVALVYAWRKGALEWS</sequence>
<dbReference type="EC" id="7.1.1.-" evidence="1"/>
<dbReference type="EMBL" id="CP001037">
    <property type="protein sequence ID" value="ACC83853.1"/>
    <property type="molecule type" value="Genomic_DNA"/>
</dbReference>
<dbReference type="RefSeq" id="WP_012411797.1">
    <property type="nucleotide sequence ID" value="NC_010628.1"/>
</dbReference>
<dbReference type="SMR" id="B2J6S7"/>
<dbReference type="STRING" id="63737.Npun_R5548"/>
<dbReference type="EnsemblBacteria" id="ACC83853">
    <property type="protein sequence ID" value="ACC83853"/>
    <property type="gene ID" value="Npun_R5548"/>
</dbReference>
<dbReference type="KEGG" id="npu:Npun_R5548"/>
<dbReference type="eggNOG" id="COG0838">
    <property type="taxonomic scope" value="Bacteria"/>
</dbReference>
<dbReference type="HOGENOM" id="CLU_119549_1_1_3"/>
<dbReference type="OrthoDB" id="9791970at2"/>
<dbReference type="PhylomeDB" id="B2J6S7"/>
<dbReference type="Proteomes" id="UP000001191">
    <property type="component" value="Chromosome"/>
</dbReference>
<dbReference type="GO" id="GO:0030964">
    <property type="term" value="C:NADH dehydrogenase complex"/>
    <property type="evidence" value="ECO:0007669"/>
    <property type="project" value="TreeGrafter"/>
</dbReference>
<dbReference type="GO" id="GO:0031676">
    <property type="term" value="C:plasma membrane-derived thylakoid membrane"/>
    <property type="evidence" value="ECO:0007669"/>
    <property type="project" value="UniProtKB-SubCell"/>
</dbReference>
<dbReference type="GO" id="GO:0008137">
    <property type="term" value="F:NADH dehydrogenase (ubiquinone) activity"/>
    <property type="evidence" value="ECO:0007669"/>
    <property type="project" value="InterPro"/>
</dbReference>
<dbReference type="GO" id="GO:0048038">
    <property type="term" value="F:quinone binding"/>
    <property type="evidence" value="ECO:0007669"/>
    <property type="project" value="UniProtKB-KW"/>
</dbReference>
<dbReference type="GO" id="GO:0019684">
    <property type="term" value="P:photosynthesis, light reaction"/>
    <property type="evidence" value="ECO:0007669"/>
    <property type="project" value="UniProtKB-UniRule"/>
</dbReference>
<dbReference type="Gene3D" id="1.20.58.1610">
    <property type="entry name" value="NADH:ubiquinone/plastoquinone oxidoreductase, chain 3"/>
    <property type="match status" value="1"/>
</dbReference>
<dbReference type="HAMAP" id="MF_01394">
    <property type="entry name" value="NDH1_NuoA"/>
    <property type="match status" value="1"/>
</dbReference>
<dbReference type="InterPro" id="IPR023043">
    <property type="entry name" value="NAD(P)H_OxRDtase_bac/plastid"/>
</dbReference>
<dbReference type="InterPro" id="IPR000440">
    <property type="entry name" value="NADH_UbQ/plastoQ_OxRdtase_su3"/>
</dbReference>
<dbReference type="InterPro" id="IPR038430">
    <property type="entry name" value="NDAH_ubi_oxred_su3_sf"/>
</dbReference>
<dbReference type="PANTHER" id="PTHR11058">
    <property type="entry name" value="NADH-UBIQUINONE OXIDOREDUCTASE CHAIN 3"/>
    <property type="match status" value="1"/>
</dbReference>
<dbReference type="PANTHER" id="PTHR11058:SF9">
    <property type="entry name" value="NADH-UBIQUINONE OXIDOREDUCTASE CHAIN 3"/>
    <property type="match status" value="1"/>
</dbReference>
<dbReference type="Pfam" id="PF00507">
    <property type="entry name" value="Oxidored_q4"/>
    <property type="match status" value="1"/>
</dbReference>
<protein>
    <recommendedName>
        <fullName evidence="1">NAD(P)H-quinone oxidoreductase subunit 3</fullName>
        <ecNumber evidence="1">7.1.1.-</ecNumber>
    </recommendedName>
    <alternativeName>
        <fullName evidence="1">NAD(P)H dehydrogenase subunit 3</fullName>
    </alternativeName>
    <alternativeName>
        <fullName evidence="1">NADH-plastoquinone oxidoreductase subunit 3</fullName>
    </alternativeName>
    <alternativeName>
        <fullName evidence="1">NDH-1 subunit 3</fullName>
        <shortName evidence="1">NDH-C</shortName>
    </alternativeName>
</protein>
<organism>
    <name type="scientific">Nostoc punctiforme (strain ATCC 29133 / PCC 73102)</name>
    <dbReference type="NCBI Taxonomy" id="63737"/>
    <lineage>
        <taxon>Bacteria</taxon>
        <taxon>Bacillati</taxon>
        <taxon>Cyanobacteriota</taxon>
        <taxon>Cyanophyceae</taxon>
        <taxon>Nostocales</taxon>
        <taxon>Nostocaceae</taxon>
        <taxon>Nostoc</taxon>
    </lineage>
</organism>
<comment type="function">
    <text evidence="1">NDH-1 shuttles electrons from an unknown electron donor, via FMN and iron-sulfur (Fe-S) centers, to quinones in the respiratory and/or the photosynthetic chain. The immediate electron acceptor for the enzyme in this species is believed to be plastoquinone. Couples the redox reaction to proton translocation, and thus conserves the redox energy in a proton gradient. Cyanobacterial NDH-1 also plays a role in inorganic carbon-concentration.</text>
</comment>
<comment type="catalytic activity">
    <reaction evidence="1">
        <text>a plastoquinone + NADH + (n+1) H(+)(in) = a plastoquinol + NAD(+) + n H(+)(out)</text>
        <dbReference type="Rhea" id="RHEA:42608"/>
        <dbReference type="Rhea" id="RHEA-COMP:9561"/>
        <dbReference type="Rhea" id="RHEA-COMP:9562"/>
        <dbReference type="ChEBI" id="CHEBI:15378"/>
        <dbReference type="ChEBI" id="CHEBI:17757"/>
        <dbReference type="ChEBI" id="CHEBI:57540"/>
        <dbReference type="ChEBI" id="CHEBI:57945"/>
        <dbReference type="ChEBI" id="CHEBI:62192"/>
    </reaction>
</comment>
<comment type="catalytic activity">
    <reaction evidence="1">
        <text>a plastoquinone + NADPH + (n+1) H(+)(in) = a plastoquinol + NADP(+) + n H(+)(out)</text>
        <dbReference type="Rhea" id="RHEA:42612"/>
        <dbReference type="Rhea" id="RHEA-COMP:9561"/>
        <dbReference type="Rhea" id="RHEA-COMP:9562"/>
        <dbReference type="ChEBI" id="CHEBI:15378"/>
        <dbReference type="ChEBI" id="CHEBI:17757"/>
        <dbReference type="ChEBI" id="CHEBI:57783"/>
        <dbReference type="ChEBI" id="CHEBI:58349"/>
        <dbReference type="ChEBI" id="CHEBI:62192"/>
    </reaction>
</comment>
<comment type="subunit">
    <text evidence="1">NDH-1 can be composed of about 15 different subunits; different subcomplexes with different compositions have been identified which probably have different functions.</text>
</comment>
<comment type="subcellular location">
    <subcellularLocation>
        <location evidence="1">Cellular thylakoid membrane</location>
        <topology evidence="1">Multi-pass membrane protein</topology>
    </subcellularLocation>
</comment>
<comment type="similarity">
    <text evidence="1">Belongs to the complex I subunit 3 family.</text>
</comment>
<name>NU3C_NOSP7</name>
<keyword id="KW-0472">Membrane</keyword>
<keyword id="KW-0520">NAD</keyword>
<keyword id="KW-0521">NADP</keyword>
<keyword id="KW-0618">Plastoquinone</keyword>
<keyword id="KW-0874">Quinone</keyword>
<keyword id="KW-1185">Reference proteome</keyword>
<keyword id="KW-0793">Thylakoid</keyword>
<keyword id="KW-1278">Translocase</keyword>
<keyword id="KW-0812">Transmembrane</keyword>
<keyword id="KW-1133">Transmembrane helix</keyword>
<keyword id="KW-0813">Transport</keyword>